<keyword id="KW-0927">Auxin signaling pathway</keyword>
<keyword id="KW-0238">DNA-binding</keyword>
<keyword id="KW-0539">Nucleus</keyword>
<keyword id="KW-1185">Reference proteome</keyword>
<keyword id="KW-0804">Transcription</keyword>
<keyword id="KW-0805">Transcription regulation</keyword>
<evidence type="ECO:0000250" key="1"/>
<evidence type="ECO:0000255" key="2">
    <source>
        <dbReference type="PROSITE-ProRule" id="PRU00326"/>
    </source>
</evidence>
<evidence type="ECO:0000255" key="3">
    <source>
        <dbReference type="PROSITE-ProRule" id="PRU01081"/>
    </source>
</evidence>
<evidence type="ECO:0000269" key="4">
    <source>
    </source>
</evidence>
<evidence type="ECO:0000305" key="5"/>
<proteinExistence type="evidence at transcript level"/>
<reference key="1">
    <citation type="journal article" date="2005" name="Plant Cell">
        <title>Functional genomic analysis of the AUXIN RESPONSE FACTOR gene family members in Arabidopsis thaliana: unique and overlapping functions of ARF7 and ARF19.</title>
        <authorList>
            <person name="Okushima Y."/>
            <person name="Overvoorde P.J."/>
            <person name="Arima K."/>
            <person name="Alonso J.M."/>
            <person name="Chan A."/>
            <person name="Chang C."/>
            <person name="Ecker J.R."/>
            <person name="Hughes B."/>
            <person name="Lui A."/>
            <person name="Nguyen D."/>
            <person name="Onodera C."/>
            <person name="Quach H."/>
            <person name="Smith A."/>
            <person name="Yu G."/>
            <person name="Theologis A."/>
        </authorList>
    </citation>
    <scope>NUCLEOTIDE SEQUENCE [MRNA]</scope>
    <source>
        <strain>cv. Columbia</strain>
    </source>
</reference>
<reference key="2">
    <citation type="journal article" date="2000" name="Nature">
        <title>Sequence and analysis of chromosome 1 of the plant Arabidopsis thaliana.</title>
        <authorList>
            <person name="Theologis A."/>
            <person name="Ecker J.R."/>
            <person name="Palm C.J."/>
            <person name="Federspiel N.A."/>
            <person name="Kaul S."/>
            <person name="White O."/>
            <person name="Alonso J."/>
            <person name="Altafi H."/>
            <person name="Araujo R."/>
            <person name="Bowman C.L."/>
            <person name="Brooks S.Y."/>
            <person name="Buehler E."/>
            <person name="Chan A."/>
            <person name="Chao Q."/>
            <person name="Chen H."/>
            <person name="Cheuk R.F."/>
            <person name="Chin C.W."/>
            <person name="Chung M.K."/>
            <person name="Conn L."/>
            <person name="Conway A.B."/>
            <person name="Conway A.R."/>
            <person name="Creasy T.H."/>
            <person name="Dewar K."/>
            <person name="Dunn P."/>
            <person name="Etgu P."/>
            <person name="Feldblyum T.V."/>
            <person name="Feng J.-D."/>
            <person name="Fong B."/>
            <person name="Fujii C.Y."/>
            <person name="Gill J.E."/>
            <person name="Goldsmith A.D."/>
            <person name="Haas B."/>
            <person name="Hansen N.F."/>
            <person name="Hughes B."/>
            <person name="Huizar L."/>
            <person name="Hunter J.L."/>
            <person name="Jenkins J."/>
            <person name="Johnson-Hopson C."/>
            <person name="Khan S."/>
            <person name="Khaykin E."/>
            <person name="Kim C.J."/>
            <person name="Koo H.L."/>
            <person name="Kremenetskaia I."/>
            <person name="Kurtz D.B."/>
            <person name="Kwan A."/>
            <person name="Lam B."/>
            <person name="Langin-Hooper S."/>
            <person name="Lee A."/>
            <person name="Lee J.M."/>
            <person name="Lenz C.A."/>
            <person name="Li J.H."/>
            <person name="Li Y.-P."/>
            <person name="Lin X."/>
            <person name="Liu S.X."/>
            <person name="Liu Z.A."/>
            <person name="Luros J.S."/>
            <person name="Maiti R."/>
            <person name="Marziali A."/>
            <person name="Militscher J."/>
            <person name="Miranda M."/>
            <person name="Nguyen M."/>
            <person name="Nierman W.C."/>
            <person name="Osborne B.I."/>
            <person name="Pai G."/>
            <person name="Peterson J."/>
            <person name="Pham P.K."/>
            <person name="Rizzo M."/>
            <person name="Rooney T."/>
            <person name="Rowley D."/>
            <person name="Sakano H."/>
            <person name="Salzberg S.L."/>
            <person name="Schwartz J.R."/>
            <person name="Shinn P."/>
            <person name="Southwick A.M."/>
            <person name="Sun H."/>
            <person name="Tallon L.J."/>
            <person name="Tambunga G."/>
            <person name="Toriumi M.J."/>
            <person name="Town C.D."/>
            <person name="Utterback T."/>
            <person name="Van Aken S."/>
            <person name="Vaysberg M."/>
            <person name="Vysotskaia V.S."/>
            <person name="Walker M."/>
            <person name="Wu D."/>
            <person name="Yu G."/>
            <person name="Fraser C.M."/>
            <person name="Venter J.C."/>
            <person name="Davis R.W."/>
        </authorList>
    </citation>
    <scope>NUCLEOTIDE SEQUENCE [LARGE SCALE GENOMIC DNA]</scope>
    <source>
        <strain>cv. Columbia</strain>
    </source>
</reference>
<reference key="3">
    <citation type="journal article" date="2017" name="Plant J.">
        <title>Araport11: a complete reannotation of the Arabidopsis thaliana reference genome.</title>
        <authorList>
            <person name="Cheng C.Y."/>
            <person name="Krishnakumar V."/>
            <person name="Chan A.P."/>
            <person name="Thibaud-Nissen F."/>
            <person name="Schobel S."/>
            <person name="Town C.D."/>
        </authorList>
    </citation>
    <scope>GENOME REANNOTATION</scope>
    <source>
        <strain>cv. Columbia</strain>
    </source>
</reference>
<reference key="4">
    <citation type="journal article" date="2002" name="Plant Mol. Biol.">
        <title>Auxin-responsive gene expression: genes, promoters and regulatory factors.</title>
        <authorList>
            <person name="Hagen G."/>
            <person name="Guilfoyle T.J."/>
        </authorList>
    </citation>
    <scope>GENE FAMILY</scope>
    <scope>NOMENCLATURE</scope>
    <scope>FUNCTION</scope>
</reference>
<reference key="5">
    <citation type="journal article" date="2008" name="Trends Plant Sci.">
        <title>The plant B3 superfamily.</title>
        <authorList>
            <person name="Swaminathan K."/>
            <person name="Peterson K."/>
            <person name="Jack T."/>
        </authorList>
    </citation>
    <scope>GENE FAMILY</scope>
</reference>
<dbReference type="EMBL" id="AY669796">
    <property type="protein sequence ID" value="AAT67080.1"/>
    <property type="molecule type" value="mRNA"/>
</dbReference>
<dbReference type="EMBL" id="AC023913">
    <property type="protein sequence ID" value="AAG51894.1"/>
    <property type="status" value="ALT_SEQ"/>
    <property type="molecule type" value="Genomic_DNA"/>
</dbReference>
<dbReference type="EMBL" id="CP002684">
    <property type="protein sequence ID" value="AEE31708.1"/>
    <property type="molecule type" value="Genomic_DNA"/>
</dbReference>
<dbReference type="PIR" id="C86468">
    <property type="entry name" value="C86468"/>
</dbReference>
<dbReference type="RefSeq" id="NP_174699.2">
    <property type="nucleotide sequence ID" value="NM_103162.2"/>
</dbReference>
<dbReference type="SMR" id="Q9C8N7"/>
<dbReference type="BioGRID" id="25573">
    <property type="interactions" value="11"/>
</dbReference>
<dbReference type="FunCoup" id="Q9C8N7">
    <property type="interactions" value="289"/>
</dbReference>
<dbReference type="IntAct" id="Q9C8N7">
    <property type="interactions" value="10"/>
</dbReference>
<dbReference type="STRING" id="3702.Q9C8N7"/>
<dbReference type="PaxDb" id="3702-AT1G34390.1"/>
<dbReference type="ProteomicsDB" id="240886"/>
<dbReference type="EnsemblPlants" id="AT1G34390.1">
    <property type="protein sequence ID" value="AT1G34390.1"/>
    <property type="gene ID" value="AT1G34390"/>
</dbReference>
<dbReference type="GeneID" id="840341"/>
<dbReference type="Gramene" id="AT1G34390.1">
    <property type="protein sequence ID" value="AT1G34390.1"/>
    <property type="gene ID" value="AT1G34390"/>
</dbReference>
<dbReference type="KEGG" id="ath:AT1G34390"/>
<dbReference type="Araport" id="AT1G34390"/>
<dbReference type="TAIR" id="AT1G34390">
    <property type="gene designation" value="ARF22"/>
</dbReference>
<dbReference type="eggNOG" id="ENOG502QTME">
    <property type="taxonomic scope" value="Eukaryota"/>
</dbReference>
<dbReference type="HOGENOM" id="CLU_002626_4_4_1"/>
<dbReference type="InParanoid" id="Q9C8N7"/>
<dbReference type="OMA" id="YWKGSEW"/>
<dbReference type="PhylomeDB" id="Q9C8N7"/>
<dbReference type="PRO" id="PR:Q9C8N7"/>
<dbReference type="Proteomes" id="UP000006548">
    <property type="component" value="Chromosome 1"/>
</dbReference>
<dbReference type="ExpressionAtlas" id="Q9C8N7">
    <property type="expression patterns" value="baseline and differential"/>
</dbReference>
<dbReference type="GO" id="GO:0005634">
    <property type="term" value="C:nucleus"/>
    <property type="evidence" value="ECO:0007669"/>
    <property type="project" value="UniProtKB-SubCell"/>
</dbReference>
<dbReference type="GO" id="GO:0003700">
    <property type="term" value="F:DNA-binding transcription factor activity"/>
    <property type="evidence" value="ECO:0000250"/>
    <property type="project" value="TAIR"/>
</dbReference>
<dbReference type="GO" id="GO:0000976">
    <property type="term" value="F:transcription cis-regulatory region binding"/>
    <property type="evidence" value="ECO:0000353"/>
    <property type="project" value="TAIR"/>
</dbReference>
<dbReference type="GO" id="GO:0009734">
    <property type="term" value="P:auxin-activated signaling pathway"/>
    <property type="evidence" value="ECO:0007669"/>
    <property type="project" value="UniProtKB-KW"/>
</dbReference>
<dbReference type="GO" id="GO:0006355">
    <property type="term" value="P:regulation of DNA-templated transcription"/>
    <property type="evidence" value="ECO:0000304"/>
    <property type="project" value="TAIR"/>
</dbReference>
<dbReference type="CDD" id="cd10017">
    <property type="entry name" value="B3_DNA"/>
    <property type="match status" value="1"/>
</dbReference>
<dbReference type="FunFam" id="2.30.30.1040:FF:000001">
    <property type="entry name" value="Auxin response factor"/>
    <property type="match status" value="1"/>
</dbReference>
<dbReference type="FunFam" id="2.40.330.10:FF:000001">
    <property type="entry name" value="Auxin response factor"/>
    <property type="match status" value="1"/>
</dbReference>
<dbReference type="Gene3D" id="2.30.30.1040">
    <property type="match status" value="1"/>
</dbReference>
<dbReference type="Gene3D" id="2.40.330.10">
    <property type="entry name" value="DNA-binding pseudobarrel domain"/>
    <property type="match status" value="1"/>
</dbReference>
<dbReference type="Gene3D" id="3.10.20.90">
    <property type="entry name" value="Phosphatidylinositol 3-kinase Catalytic Subunit, Chain A, domain 1"/>
    <property type="match status" value="1"/>
</dbReference>
<dbReference type="InterPro" id="IPR010525">
    <property type="entry name" value="ARF_dom"/>
</dbReference>
<dbReference type="InterPro" id="IPR044835">
    <property type="entry name" value="ARF_plant"/>
</dbReference>
<dbReference type="InterPro" id="IPR033389">
    <property type="entry name" value="AUX/IAA_dom"/>
</dbReference>
<dbReference type="InterPro" id="IPR003340">
    <property type="entry name" value="B3_DNA-bd"/>
</dbReference>
<dbReference type="InterPro" id="IPR015300">
    <property type="entry name" value="DNA-bd_pseudobarrel_sf"/>
</dbReference>
<dbReference type="InterPro" id="IPR053793">
    <property type="entry name" value="PB1-like"/>
</dbReference>
<dbReference type="PANTHER" id="PTHR31384:SF164">
    <property type="entry name" value="AUXIN RESPONSE FACTOR 12-RELATED"/>
    <property type="match status" value="1"/>
</dbReference>
<dbReference type="PANTHER" id="PTHR31384">
    <property type="entry name" value="AUXIN RESPONSE FACTOR 4-RELATED"/>
    <property type="match status" value="1"/>
</dbReference>
<dbReference type="Pfam" id="PF06507">
    <property type="entry name" value="ARF_AD"/>
    <property type="match status" value="1"/>
</dbReference>
<dbReference type="Pfam" id="PF02309">
    <property type="entry name" value="AUX_IAA"/>
    <property type="match status" value="2"/>
</dbReference>
<dbReference type="Pfam" id="PF02362">
    <property type="entry name" value="B3"/>
    <property type="match status" value="1"/>
</dbReference>
<dbReference type="SMART" id="SM01019">
    <property type="entry name" value="B3"/>
    <property type="match status" value="1"/>
</dbReference>
<dbReference type="SUPFAM" id="SSF54277">
    <property type="entry name" value="CAD &amp; PB1 domains"/>
    <property type="match status" value="1"/>
</dbReference>
<dbReference type="SUPFAM" id="SSF101936">
    <property type="entry name" value="DNA-binding pseudobarrel domain"/>
    <property type="match status" value="1"/>
</dbReference>
<dbReference type="PROSITE" id="PS50863">
    <property type="entry name" value="B3"/>
    <property type="match status" value="1"/>
</dbReference>
<dbReference type="PROSITE" id="PS51745">
    <property type="entry name" value="PB1"/>
    <property type="match status" value="1"/>
</dbReference>
<sequence length="598" mass="67733">MESGNIVNAQPELSGIIDGSKSYMYEQLWKLCAGPLCDIPKLGEKIYYFPQGNIELVEASTREELNELKPICDLPSKLQCRVIAIQLKVENNSDETYAEITLMPDTTQVVIPTQNENQFRPLVNSFTKVLTASDTSGGFFVPKKHAIECLPPLDMSQPLPTQELLATDLHGNQWRFNHNYRGTPQRHLLTTGWNAFTTSKKLVAGDVIVFVRGETGELRVGIRRAGHQQGNIPSSIISIESMRHGVIASAKHAFDNQCMFIVVYKPRSSQFIVSYDKFLDAVNNKFNVGSRFTMRFEGDDFSERRYFGTIIGVSDFSPHWKCSEWRNLEVQWDEFASFSRPNKVSPWEIEHLMPALNVPRPSLLKNKRLREVNEIGSSSSHLLPPILTQGQEIGQLSVASPMNISLTYRDTTEDVMNPSRLLMSYPVQPMPKLNYNNQMVTQIEENITTKTGTNFRLFGVSLVTPSVIKDPIEEIGSEISKLTEGKKFGQSQTLRSPTEIQSKQFSSTRTCTKVQMQGVTIERAVDLSVLNGYDQLILELEELFDLKGQLQTRNQWEIAFTDSDDDKMLVGDDPWPEFCNMVKKILIFKRGGQKLEVQ</sequence>
<protein>
    <recommendedName>
        <fullName>Auxin response factor 22</fullName>
    </recommendedName>
</protein>
<accession>Q9C8N7</accession>
<accession>Q5IRX1</accession>
<feature type="chain" id="PRO_0000111526" description="Auxin response factor 22">
    <location>
        <begin position="1"/>
        <end position="598"/>
    </location>
</feature>
<feature type="domain" description="PB1" evidence="3">
    <location>
        <begin position="509"/>
        <end position="590"/>
    </location>
</feature>
<feature type="DNA-binding region" description="TF-B3" evidence="2">
    <location>
        <begin position="124"/>
        <end position="226"/>
    </location>
</feature>
<organism>
    <name type="scientific">Arabidopsis thaliana</name>
    <name type="common">Mouse-ear cress</name>
    <dbReference type="NCBI Taxonomy" id="3702"/>
    <lineage>
        <taxon>Eukaryota</taxon>
        <taxon>Viridiplantae</taxon>
        <taxon>Streptophyta</taxon>
        <taxon>Embryophyta</taxon>
        <taxon>Tracheophyta</taxon>
        <taxon>Spermatophyta</taxon>
        <taxon>Magnoliopsida</taxon>
        <taxon>eudicotyledons</taxon>
        <taxon>Gunneridae</taxon>
        <taxon>Pentapetalae</taxon>
        <taxon>rosids</taxon>
        <taxon>malvids</taxon>
        <taxon>Brassicales</taxon>
        <taxon>Brassicaceae</taxon>
        <taxon>Camelineae</taxon>
        <taxon>Arabidopsis</taxon>
    </lineage>
</organism>
<gene>
    <name type="primary">ARF22</name>
    <name type="ordered locus">At1g34390</name>
    <name type="ORF">F7P12.6</name>
</gene>
<name>ARFV_ARATH</name>
<comment type="function">
    <text evidence="4">Auxin response factors (ARFs) are transcriptional factors that bind specifically to the DNA sequence 5'-TGTCTC-3' found in the auxin-responsive promoter elements (AuxREs). Could act as transcriptional activator or repressor. Formation of heterodimers with Aux/IAA proteins may alter their ability to modulate early auxin response genes expression.</text>
</comment>
<comment type="subunit">
    <text evidence="1">Homodimers and heterodimers.</text>
</comment>
<comment type="subcellular location">
    <subcellularLocation>
        <location>Nucleus</location>
    </subcellularLocation>
</comment>
<comment type="domain">
    <text>Interactions between auxin response factors (ARFs) and Aux/IAA proteins occur through their C-terminal dimerization domains III and IV.</text>
</comment>
<comment type="similarity">
    <text evidence="5">Belongs to the ARF family.</text>
</comment>
<comment type="sequence caution" evidence="5">
    <conflict type="erroneous gene model prediction">
        <sequence resource="EMBL-CDS" id="AAG51894"/>
    </conflict>
</comment>